<protein>
    <recommendedName>
        <fullName evidence="1">Chaperone protein DnaK</fullName>
    </recommendedName>
    <alternativeName>
        <fullName evidence="1">HSP70</fullName>
    </alternativeName>
    <alternativeName>
        <fullName evidence="1">Heat shock 70 kDa protein</fullName>
    </alternativeName>
    <alternativeName>
        <fullName evidence="1">Heat shock protein 70</fullName>
    </alternativeName>
</protein>
<gene>
    <name evidence="1" type="primary">dnaK</name>
    <name type="ordered locus">Rpal_0336</name>
</gene>
<dbReference type="EMBL" id="CP001096">
    <property type="protein sequence ID" value="ACE98896.1"/>
    <property type="molecule type" value="Genomic_DNA"/>
</dbReference>
<dbReference type="RefSeq" id="WP_011155901.1">
    <property type="nucleotide sequence ID" value="NC_011004.1"/>
</dbReference>
<dbReference type="SMR" id="B3Q972"/>
<dbReference type="GeneID" id="66891344"/>
<dbReference type="KEGG" id="rpt:Rpal_0336"/>
<dbReference type="HOGENOM" id="CLU_005965_2_1_5"/>
<dbReference type="OrthoDB" id="9766019at2"/>
<dbReference type="Proteomes" id="UP000001725">
    <property type="component" value="Chromosome"/>
</dbReference>
<dbReference type="GO" id="GO:0005524">
    <property type="term" value="F:ATP binding"/>
    <property type="evidence" value="ECO:0007669"/>
    <property type="project" value="UniProtKB-UniRule"/>
</dbReference>
<dbReference type="GO" id="GO:0140662">
    <property type="term" value="F:ATP-dependent protein folding chaperone"/>
    <property type="evidence" value="ECO:0007669"/>
    <property type="project" value="InterPro"/>
</dbReference>
<dbReference type="GO" id="GO:0051082">
    <property type="term" value="F:unfolded protein binding"/>
    <property type="evidence" value="ECO:0007669"/>
    <property type="project" value="InterPro"/>
</dbReference>
<dbReference type="CDD" id="cd11733">
    <property type="entry name" value="ASKHA_NBD_HSP70_HSPA9"/>
    <property type="match status" value="1"/>
</dbReference>
<dbReference type="FunFam" id="2.60.34.10:FF:000014">
    <property type="entry name" value="Chaperone protein DnaK HSP70"/>
    <property type="match status" value="1"/>
</dbReference>
<dbReference type="FunFam" id="3.30.420.40:FF:000020">
    <property type="entry name" value="Chaperone protein HscA homolog"/>
    <property type="match status" value="1"/>
</dbReference>
<dbReference type="FunFam" id="3.30.30.30:FF:000003">
    <property type="entry name" value="Heat shock protein 9"/>
    <property type="match status" value="1"/>
</dbReference>
<dbReference type="FunFam" id="1.20.1270.10:FF:000001">
    <property type="entry name" value="Molecular chaperone DnaK"/>
    <property type="match status" value="1"/>
</dbReference>
<dbReference type="FunFam" id="3.30.420.40:FF:000004">
    <property type="entry name" value="Molecular chaperone DnaK"/>
    <property type="match status" value="1"/>
</dbReference>
<dbReference type="FunFam" id="3.90.640.10:FF:000003">
    <property type="entry name" value="Molecular chaperone DnaK"/>
    <property type="match status" value="1"/>
</dbReference>
<dbReference type="Gene3D" id="1.20.1270.10">
    <property type="match status" value="1"/>
</dbReference>
<dbReference type="Gene3D" id="3.30.420.40">
    <property type="match status" value="2"/>
</dbReference>
<dbReference type="Gene3D" id="3.90.640.10">
    <property type="entry name" value="Actin, Chain A, domain 4"/>
    <property type="match status" value="1"/>
</dbReference>
<dbReference type="Gene3D" id="2.60.34.10">
    <property type="entry name" value="Substrate Binding Domain Of DNAk, Chain A, domain 1"/>
    <property type="match status" value="1"/>
</dbReference>
<dbReference type="HAMAP" id="MF_00332">
    <property type="entry name" value="DnaK"/>
    <property type="match status" value="1"/>
</dbReference>
<dbReference type="InterPro" id="IPR043129">
    <property type="entry name" value="ATPase_NBD"/>
</dbReference>
<dbReference type="InterPro" id="IPR012725">
    <property type="entry name" value="Chaperone_DnaK"/>
</dbReference>
<dbReference type="InterPro" id="IPR018181">
    <property type="entry name" value="Heat_shock_70_CS"/>
</dbReference>
<dbReference type="InterPro" id="IPR029048">
    <property type="entry name" value="HSP70_C_sf"/>
</dbReference>
<dbReference type="InterPro" id="IPR029047">
    <property type="entry name" value="HSP70_peptide-bd_sf"/>
</dbReference>
<dbReference type="InterPro" id="IPR013126">
    <property type="entry name" value="Hsp_70_fam"/>
</dbReference>
<dbReference type="NCBIfam" id="NF001413">
    <property type="entry name" value="PRK00290.1"/>
    <property type="match status" value="1"/>
</dbReference>
<dbReference type="NCBIfam" id="NF003520">
    <property type="entry name" value="PRK05183.1"/>
    <property type="match status" value="1"/>
</dbReference>
<dbReference type="NCBIfam" id="TIGR02350">
    <property type="entry name" value="prok_dnaK"/>
    <property type="match status" value="1"/>
</dbReference>
<dbReference type="PANTHER" id="PTHR19375">
    <property type="entry name" value="HEAT SHOCK PROTEIN 70KDA"/>
    <property type="match status" value="1"/>
</dbReference>
<dbReference type="Pfam" id="PF00012">
    <property type="entry name" value="HSP70"/>
    <property type="match status" value="1"/>
</dbReference>
<dbReference type="PRINTS" id="PR00301">
    <property type="entry name" value="HEATSHOCK70"/>
</dbReference>
<dbReference type="SUPFAM" id="SSF53067">
    <property type="entry name" value="Actin-like ATPase domain"/>
    <property type="match status" value="2"/>
</dbReference>
<dbReference type="SUPFAM" id="SSF100934">
    <property type="entry name" value="Heat shock protein 70kD (HSP70), C-terminal subdomain"/>
    <property type="match status" value="1"/>
</dbReference>
<dbReference type="SUPFAM" id="SSF100920">
    <property type="entry name" value="Heat shock protein 70kD (HSP70), peptide-binding domain"/>
    <property type="match status" value="1"/>
</dbReference>
<dbReference type="PROSITE" id="PS00297">
    <property type="entry name" value="HSP70_1"/>
    <property type="match status" value="1"/>
</dbReference>
<dbReference type="PROSITE" id="PS00329">
    <property type="entry name" value="HSP70_2"/>
    <property type="match status" value="1"/>
</dbReference>
<dbReference type="PROSITE" id="PS01036">
    <property type="entry name" value="HSP70_3"/>
    <property type="match status" value="1"/>
</dbReference>
<sequence length="631" mass="67947">MGKVIGIDLGTTNSCVAVMDGKSAKVIENAEGMRTTPSIVAITDDGERLVGQPAKRQAVTNPERTFFAVKRLIGRRYDDPMVEKDKGLVPYKIVKASNGDAWVEADGKTYSPSQVSAFILQKMKETAEAHLGQKVDQAVITVPAYFNDAQRQATKDAGKIAGLEVLRIINEPTAAALAYGLDKAKTGTIAVYDLGGGTFDVSILEIGDGVFEVKSTNGDTFLGGEDFDMRLVNYLADEFQKEQGIDLRKDKLALQRLKEAAEKAKIELSSTTQTEINLPFITADQSGPKHLTMKLTRAKFEALVDDLVQKTIEPCRKALKDAGLTAGEISEVVLVGGMTRMPKVQEVVKQLFGKEPHKGVNPDEVVAIGAAIQAGVLQGDVKDVLLLDVTPLSLGIETLGGVFTRIIDRNTTIPTKKSQVFSTAEDNQNAVTIRVFQGEREMAADNKMLGQFDLMGIPPAPRGMPQIEVTFDIDANGIVNVSAKDKATGKEQQIRIQASGGLSDSEIDKMVKDAEANAAEDKKRREAVDAKNHADALVHSTEKALAEHGSKVDESERRSIEDALSDLREALKGDDAEAIKAKSNTLAQASMKLGEAMYKQAEAAGGAQQAGKDDVVDAEFTEVDDDKKKSA</sequence>
<evidence type="ECO:0000255" key="1">
    <source>
        <dbReference type="HAMAP-Rule" id="MF_00332"/>
    </source>
</evidence>
<evidence type="ECO:0000256" key="2">
    <source>
        <dbReference type="SAM" id="MobiDB-lite"/>
    </source>
</evidence>
<reference key="1">
    <citation type="submission" date="2008-05" db="EMBL/GenBank/DDBJ databases">
        <title>Complete sequence of Rhodopseudomonas palustris TIE-1.</title>
        <authorList>
            <consortium name="US DOE Joint Genome Institute"/>
            <person name="Lucas S."/>
            <person name="Copeland A."/>
            <person name="Lapidus A."/>
            <person name="Glavina del Rio T."/>
            <person name="Dalin E."/>
            <person name="Tice H."/>
            <person name="Pitluck S."/>
            <person name="Chain P."/>
            <person name="Malfatti S."/>
            <person name="Shin M."/>
            <person name="Vergez L."/>
            <person name="Lang D."/>
            <person name="Schmutz J."/>
            <person name="Larimer F."/>
            <person name="Land M."/>
            <person name="Hauser L."/>
            <person name="Kyrpides N."/>
            <person name="Mikhailova N."/>
            <person name="Emerson D."/>
            <person name="Newman D.K."/>
            <person name="Roden E."/>
            <person name="Richardson P."/>
        </authorList>
    </citation>
    <scope>NUCLEOTIDE SEQUENCE [LARGE SCALE GENOMIC DNA]</scope>
    <source>
        <strain>TIE-1</strain>
    </source>
</reference>
<name>DNAK_RHOPT</name>
<organism>
    <name type="scientific">Rhodopseudomonas palustris (strain TIE-1)</name>
    <dbReference type="NCBI Taxonomy" id="395960"/>
    <lineage>
        <taxon>Bacteria</taxon>
        <taxon>Pseudomonadati</taxon>
        <taxon>Pseudomonadota</taxon>
        <taxon>Alphaproteobacteria</taxon>
        <taxon>Hyphomicrobiales</taxon>
        <taxon>Nitrobacteraceae</taxon>
        <taxon>Rhodopseudomonas</taxon>
    </lineage>
</organism>
<accession>B3Q972</accession>
<proteinExistence type="inferred from homology"/>
<comment type="function">
    <text evidence="1">Acts as a chaperone.</text>
</comment>
<comment type="induction">
    <text evidence="1">By stress conditions e.g. heat shock.</text>
</comment>
<comment type="similarity">
    <text evidence="1">Belongs to the heat shock protein 70 family.</text>
</comment>
<keyword id="KW-0067">ATP-binding</keyword>
<keyword id="KW-0143">Chaperone</keyword>
<keyword id="KW-0547">Nucleotide-binding</keyword>
<keyword id="KW-0597">Phosphoprotein</keyword>
<keyword id="KW-0346">Stress response</keyword>
<feature type="chain" id="PRO_1000119748" description="Chaperone protein DnaK">
    <location>
        <begin position="1"/>
        <end position="631"/>
    </location>
</feature>
<feature type="region of interest" description="Disordered" evidence="2">
    <location>
        <begin position="602"/>
        <end position="631"/>
    </location>
</feature>
<feature type="modified residue" description="Phosphothreonine; by autocatalysis" evidence="1">
    <location>
        <position position="198"/>
    </location>
</feature>